<name>RL32_PARP8</name>
<dbReference type="EMBL" id="CP001043">
    <property type="protein sequence ID" value="ACC70015.1"/>
    <property type="molecule type" value="Genomic_DNA"/>
</dbReference>
<dbReference type="RefSeq" id="WP_012400235.1">
    <property type="nucleotide sequence ID" value="NZ_CADFGH010000007.1"/>
</dbReference>
<dbReference type="SMR" id="B2JFI7"/>
<dbReference type="STRING" id="391038.Bphy_0826"/>
<dbReference type="KEGG" id="bph:Bphy_0826"/>
<dbReference type="eggNOG" id="COG0333">
    <property type="taxonomic scope" value="Bacteria"/>
</dbReference>
<dbReference type="HOGENOM" id="CLU_129084_2_1_4"/>
<dbReference type="OrthoDB" id="9801927at2"/>
<dbReference type="Proteomes" id="UP000001192">
    <property type="component" value="Chromosome 1"/>
</dbReference>
<dbReference type="GO" id="GO:0015934">
    <property type="term" value="C:large ribosomal subunit"/>
    <property type="evidence" value="ECO:0007669"/>
    <property type="project" value="InterPro"/>
</dbReference>
<dbReference type="GO" id="GO:0003735">
    <property type="term" value="F:structural constituent of ribosome"/>
    <property type="evidence" value="ECO:0007669"/>
    <property type="project" value="InterPro"/>
</dbReference>
<dbReference type="GO" id="GO:0006412">
    <property type="term" value="P:translation"/>
    <property type="evidence" value="ECO:0007669"/>
    <property type="project" value="UniProtKB-UniRule"/>
</dbReference>
<dbReference type="HAMAP" id="MF_00340">
    <property type="entry name" value="Ribosomal_bL32"/>
    <property type="match status" value="1"/>
</dbReference>
<dbReference type="InterPro" id="IPR002677">
    <property type="entry name" value="Ribosomal_bL32"/>
</dbReference>
<dbReference type="InterPro" id="IPR044957">
    <property type="entry name" value="Ribosomal_bL32_bact"/>
</dbReference>
<dbReference type="InterPro" id="IPR011332">
    <property type="entry name" value="Ribosomal_zn-bd"/>
</dbReference>
<dbReference type="NCBIfam" id="TIGR01031">
    <property type="entry name" value="rpmF_bact"/>
    <property type="match status" value="1"/>
</dbReference>
<dbReference type="PANTHER" id="PTHR35534">
    <property type="entry name" value="50S RIBOSOMAL PROTEIN L32"/>
    <property type="match status" value="1"/>
</dbReference>
<dbReference type="PANTHER" id="PTHR35534:SF1">
    <property type="entry name" value="LARGE RIBOSOMAL SUBUNIT PROTEIN BL32"/>
    <property type="match status" value="1"/>
</dbReference>
<dbReference type="Pfam" id="PF01783">
    <property type="entry name" value="Ribosomal_L32p"/>
    <property type="match status" value="1"/>
</dbReference>
<dbReference type="SUPFAM" id="SSF57829">
    <property type="entry name" value="Zn-binding ribosomal proteins"/>
    <property type="match status" value="1"/>
</dbReference>
<protein>
    <recommendedName>
        <fullName evidence="1">Large ribosomal subunit protein bL32</fullName>
    </recommendedName>
    <alternativeName>
        <fullName evidence="3">50S ribosomal protein L32</fullName>
    </alternativeName>
</protein>
<sequence length="59" mass="6650">MAVQQNKKSPSKRGMHRSHDFLNAAPLAVEPSTGEVHLRHHISPNGYYRGKKVVKTKND</sequence>
<reference key="1">
    <citation type="journal article" date="2014" name="Stand. Genomic Sci.">
        <title>Complete genome sequence of Burkholderia phymatum STM815(T), a broad host range and efficient nitrogen-fixing symbiont of Mimosa species.</title>
        <authorList>
            <person name="Moulin L."/>
            <person name="Klonowska A."/>
            <person name="Caroline B."/>
            <person name="Booth K."/>
            <person name="Vriezen J.A."/>
            <person name="Melkonian R."/>
            <person name="James E.K."/>
            <person name="Young J.P."/>
            <person name="Bena G."/>
            <person name="Hauser L."/>
            <person name="Land M."/>
            <person name="Kyrpides N."/>
            <person name="Bruce D."/>
            <person name="Chain P."/>
            <person name="Copeland A."/>
            <person name="Pitluck S."/>
            <person name="Woyke T."/>
            <person name="Lizotte-Waniewski M."/>
            <person name="Bristow J."/>
            <person name="Riley M."/>
        </authorList>
    </citation>
    <scope>NUCLEOTIDE SEQUENCE [LARGE SCALE GENOMIC DNA]</scope>
    <source>
        <strain>DSM 17167 / CIP 108236 / LMG 21445 / STM815</strain>
    </source>
</reference>
<gene>
    <name evidence="1" type="primary">rpmF</name>
    <name type="ordered locus">Bphy_0826</name>
</gene>
<proteinExistence type="inferred from homology"/>
<comment type="similarity">
    <text evidence="1">Belongs to the bacterial ribosomal protein bL32 family.</text>
</comment>
<evidence type="ECO:0000255" key="1">
    <source>
        <dbReference type="HAMAP-Rule" id="MF_00340"/>
    </source>
</evidence>
<evidence type="ECO:0000256" key="2">
    <source>
        <dbReference type="SAM" id="MobiDB-lite"/>
    </source>
</evidence>
<evidence type="ECO:0000305" key="3"/>
<accession>B2JFI7</accession>
<keyword id="KW-1185">Reference proteome</keyword>
<keyword id="KW-0687">Ribonucleoprotein</keyword>
<keyword id="KW-0689">Ribosomal protein</keyword>
<feature type="chain" id="PRO_1000120100" description="Large ribosomal subunit protein bL32">
    <location>
        <begin position="1"/>
        <end position="59"/>
    </location>
</feature>
<feature type="region of interest" description="Disordered" evidence="2">
    <location>
        <begin position="1"/>
        <end position="25"/>
    </location>
</feature>
<organism>
    <name type="scientific">Paraburkholderia phymatum (strain DSM 17167 / CIP 108236 / LMG 21445 / STM815)</name>
    <name type="common">Burkholderia phymatum</name>
    <dbReference type="NCBI Taxonomy" id="391038"/>
    <lineage>
        <taxon>Bacteria</taxon>
        <taxon>Pseudomonadati</taxon>
        <taxon>Pseudomonadota</taxon>
        <taxon>Betaproteobacteria</taxon>
        <taxon>Burkholderiales</taxon>
        <taxon>Burkholderiaceae</taxon>
        <taxon>Paraburkholderia</taxon>
    </lineage>
</organism>